<comment type="function">
    <text evidence="1">Specifically catalyzes the decarboxylation of meso-diaminopimelate (meso-DAP) to L-lysine.</text>
</comment>
<comment type="catalytic activity">
    <reaction>
        <text>meso-2,6-diaminopimelate + H(+) = L-lysine + CO2</text>
        <dbReference type="Rhea" id="RHEA:15101"/>
        <dbReference type="ChEBI" id="CHEBI:15378"/>
        <dbReference type="ChEBI" id="CHEBI:16526"/>
        <dbReference type="ChEBI" id="CHEBI:32551"/>
        <dbReference type="ChEBI" id="CHEBI:57791"/>
        <dbReference type="EC" id="4.1.1.20"/>
    </reaction>
</comment>
<comment type="cofactor">
    <cofactor evidence="1">
        <name>pyridoxal 5'-phosphate</name>
        <dbReference type="ChEBI" id="CHEBI:597326"/>
    </cofactor>
</comment>
<comment type="pathway">
    <text>Amino-acid biosynthesis; L-lysine biosynthesis via DAP pathway; L-lysine from DL-2,6-diaminopimelate: step 1/1.</text>
</comment>
<comment type="subunit">
    <text evidence="1">Homodimer; disulfide-linked.</text>
</comment>
<comment type="similarity">
    <text evidence="3">Belongs to the Orn/Lys/Arg decarboxylase class-II family. LysA subfamily.</text>
</comment>
<organism>
    <name type="scientific">Mycobacterium tuberculosis (strain CDC 1551 / Oshkosh)</name>
    <dbReference type="NCBI Taxonomy" id="83331"/>
    <lineage>
        <taxon>Bacteria</taxon>
        <taxon>Bacillati</taxon>
        <taxon>Actinomycetota</taxon>
        <taxon>Actinomycetes</taxon>
        <taxon>Mycobacteriales</taxon>
        <taxon>Mycobacteriaceae</taxon>
        <taxon>Mycobacterium</taxon>
        <taxon>Mycobacterium tuberculosis complex</taxon>
    </lineage>
</organism>
<reference key="1">
    <citation type="journal article" date="2002" name="J. Bacteriol.">
        <title>Whole-genome comparison of Mycobacterium tuberculosis clinical and laboratory strains.</title>
        <authorList>
            <person name="Fleischmann R.D."/>
            <person name="Alland D."/>
            <person name="Eisen J.A."/>
            <person name="Carpenter L."/>
            <person name="White O."/>
            <person name="Peterson J.D."/>
            <person name="DeBoy R.T."/>
            <person name="Dodson R.J."/>
            <person name="Gwinn M.L."/>
            <person name="Haft D.H."/>
            <person name="Hickey E.K."/>
            <person name="Kolonay J.F."/>
            <person name="Nelson W.C."/>
            <person name="Umayam L.A."/>
            <person name="Ermolaeva M.D."/>
            <person name="Salzberg S.L."/>
            <person name="Delcher A."/>
            <person name="Utterback T.R."/>
            <person name="Weidman J.F."/>
            <person name="Khouri H.M."/>
            <person name="Gill J."/>
            <person name="Mikula A."/>
            <person name="Bishai W."/>
            <person name="Jacobs W.R. Jr."/>
            <person name="Venter J.C."/>
            <person name="Fraser C.M."/>
        </authorList>
    </citation>
    <scope>NUCLEOTIDE SEQUENCE [LARGE SCALE GENOMIC DNA]</scope>
    <source>
        <strain>CDC 1551 / Oshkosh</strain>
    </source>
</reference>
<evidence type="ECO:0000250" key="1"/>
<evidence type="ECO:0000255" key="2"/>
<evidence type="ECO:0000305" key="3"/>
<keyword id="KW-0028">Amino-acid biosynthesis</keyword>
<keyword id="KW-0210">Decarboxylase</keyword>
<keyword id="KW-1015">Disulfide bond</keyword>
<keyword id="KW-0456">Lyase</keyword>
<keyword id="KW-0457">Lysine biosynthesis</keyword>
<keyword id="KW-0663">Pyridoxal phosphate</keyword>
<keyword id="KW-1185">Reference proteome</keyword>
<name>DCDA_MYCTO</name>
<accession>P9WIU6</accession>
<accession>L0T7U9</accession>
<accession>P0A5M4</accession>
<accession>P31848</accession>
<feature type="chain" id="PRO_0000427943" description="Diaminopimelate decarboxylase">
    <location>
        <begin position="1"/>
        <end position="447"/>
    </location>
</feature>
<feature type="active site" description="Proton donor" evidence="2">
    <location>
        <position position="375"/>
    </location>
</feature>
<feature type="binding site" evidence="1">
    <location>
        <position position="216"/>
    </location>
    <ligand>
        <name>substrate</name>
    </ligand>
</feature>
<feature type="binding site" evidence="1">
    <location>
        <position position="258"/>
    </location>
    <ligand>
        <name>pyridoxal 5'-phosphate</name>
        <dbReference type="ChEBI" id="CHEBI:597326"/>
    </ligand>
</feature>
<feature type="binding site">
    <location>
        <begin position="300"/>
        <end position="303"/>
    </location>
    <ligand>
        <name>pyridoxal 5'-phosphate</name>
        <dbReference type="ChEBI" id="CHEBI:597326"/>
    </ligand>
</feature>
<feature type="binding site" evidence="1">
    <location>
        <position position="303"/>
    </location>
    <ligand>
        <name>substrate</name>
    </ligand>
</feature>
<feature type="binding site" evidence="1">
    <location>
        <position position="344"/>
    </location>
    <ligand>
        <name>substrate</name>
    </ligand>
</feature>
<feature type="binding site" evidence="1">
    <location>
        <position position="348"/>
    </location>
    <ligand>
        <name>substrate</name>
    </ligand>
</feature>
<feature type="binding site" evidence="1">
    <location>
        <position position="376"/>
    </location>
    <ligand>
        <name>substrate</name>
    </ligand>
</feature>
<feature type="binding site" evidence="1">
    <location>
        <position position="405"/>
    </location>
    <ligand>
        <name>pyridoxal 5'-phosphate</name>
        <dbReference type="ChEBI" id="CHEBI:597326"/>
    </ligand>
</feature>
<feature type="binding site" evidence="1">
    <location>
        <position position="405"/>
    </location>
    <ligand>
        <name>substrate</name>
    </ligand>
</feature>
<feature type="modified residue" description="N6-(pyridoxal phosphate)lysine" evidence="1">
    <location>
        <position position="72"/>
    </location>
</feature>
<feature type="disulfide bond" description="Interchain (with C-375)" evidence="1">
    <location>
        <position position="93"/>
    </location>
</feature>
<feature type="disulfide bond" description="Interchain (with C-72)" evidence="1">
    <location>
        <position position="375"/>
    </location>
</feature>
<sequence length="447" mass="47458">MNELLHLAPNVWPRNTTRDEVGVVCIAGIPLTQLAQEYGTPLFVIDEDDFRSRCRETAAAFGSGANVHYAAKAFLCSEVARWISEEGLCLDVCTGGELAVALHASFPPERITLHGNNKSVSELTAAVKAGVGHIVVDSMTEIERLDAIAGEAGIVQDVLVRLTVGVEAHTHEFISTAHEDQKFGLSVASGAAMAAVRRVFATDHLRLVGLHSHIGSQIFDVDGFELAAHRVIGLLRDVVGEFGPEKTAQIATVDLGGGLGISYLPSDDPPPIAELAAKLGTIVSDESTAVGLPTPKLVVEPGRAIAGPGTITLYEVGTVKDVDVSATAHRRYVSVDGGMSDNIRTALYGAQYDVRLVSRVSDAPPVPARLVGKHCESGDIIVRDTWVPDDIRPGDLVAVAATGAYCYSLSSRYNMVGRPAVVAVHAGNARLVLRRETVDDLLSLEVR</sequence>
<protein>
    <recommendedName>
        <fullName>Diaminopimelate decarboxylase</fullName>
        <shortName>DAP decarboxylase</shortName>
        <shortName>DAPDC</shortName>
        <ecNumber>4.1.1.20</ecNumber>
    </recommendedName>
</protein>
<gene>
    <name type="primary">lysA</name>
    <name type="ordered locus">MT1332</name>
</gene>
<proteinExistence type="inferred from homology"/>
<dbReference type="EC" id="4.1.1.20"/>
<dbReference type="EMBL" id="AE000516">
    <property type="protein sequence ID" value="AAK45594.1"/>
    <property type="molecule type" value="Genomic_DNA"/>
</dbReference>
<dbReference type="PIR" id="A70773">
    <property type="entry name" value="A70773"/>
</dbReference>
<dbReference type="RefSeq" id="WP_003406632.1">
    <property type="nucleotide sequence ID" value="NZ_KK341227.1"/>
</dbReference>
<dbReference type="SMR" id="P9WIU6"/>
<dbReference type="GeneID" id="45425267"/>
<dbReference type="KEGG" id="mtc:MT1332"/>
<dbReference type="PATRIC" id="fig|83331.31.peg.1438"/>
<dbReference type="HOGENOM" id="CLU_026444_0_1_11"/>
<dbReference type="UniPathway" id="UPA00034">
    <property type="reaction ID" value="UER00027"/>
</dbReference>
<dbReference type="Proteomes" id="UP000001020">
    <property type="component" value="Chromosome"/>
</dbReference>
<dbReference type="GO" id="GO:0008836">
    <property type="term" value="F:diaminopimelate decarboxylase activity"/>
    <property type="evidence" value="ECO:0007669"/>
    <property type="project" value="UniProtKB-UniRule"/>
</dbReference>
<dbReference type="GO" id="GO:0030170">
    <property type="term" value="F:pyridoxal phosphate binding"/>
    <property type="evidence" value="ECO:0007669"/>
    <property type="project" value="UniProtKB-UniRule"/>
</dbReference>
<dbReference type="GO" id="GO:0009089">
    <property type="term" value="P:lysine biosynthetic process via diaminopimelate"/>
    <property type="evidence" value="ECO:0007669"/>
    <property type="project" value="UniProtKB-UniRule"/>
</dbReference>
<dbReference type="CDD" id="cd06828">
    <property type="entry name" value="PLPDE_III_DapDC"/>
    <property type="match status" value="1"/>
</dbReference>
<dbReference type="FunFam" id="2.40.37.10:FF:000003">
    <property type="entry name" value="Diaminopimelate decarboxylase"/>
    <property type="match status" value="1"/>
</dbReference>
<dbReference type="FunFam" id="3.20.20.10:FF:000003">
    <property type="entry name" value="Diaminopimelate decarboxylase"/>
    <property type="match status" value="1"/>
</dbReference>
<dbReference type="Gene3D" id="3.20.20.10">
    <property type="entry name" value="Alanine racemase"/>
    <property type="match status" value="1"/>
</dbReference>
<dbReference type="Gene3D" id="2.40.37.10">
    <property type="entry name" value="Lyase, Ornithine Decarboxylase, Chain A, domain 1"/>
    <property type="match status" value="1"/>
</dbReference>
<dbReference type="HAMAP" id="MF_02120">
    <property type="entry name" value="LysA"/>
    <property type="match status" value="1"/>
</dbReference>
<dbReference type="InterPro" id="IPR009006">
    <property type="entry name" value="Ala_racemase/Decarboxylase_C"/>
</dbReference>
<dbReference type="InterPro" id="IPR002986">
    <property type="entry name" value="DAP_deCOOHase_LysA"/>
</dbReference>
<dbReference type="InterPro" id="IPR022643">
    <property type="entry name" value="De-COase2_C"/>
</dbReference>
<dbReference type="InterPro" id="IPR022657">
    <property type="entry name" value="De-COase2_CS"/>
</dbReference>
<dbReference type="InterPro" id="IPR022644">
    <property type="entry name" value="De-COase2_N"/>
</dbReference>
<dbReference type="InterPro" id="IPR022653">
    <property type="entry name" value="De-COase2_pyr-phos_BS"/>
</dbReference>
<dbReference type="InterPro" id="IPR000183">
    <property type="entry name" value="Orn/DAP/Arg_de-COase"/>
</dbReference>
<dbReference type="InterPro" id="IPR029066">
    <property type="entry name" value="PLP-binding_barrel"/>
</dbReference>
<dbReference type="NCBIfam" id="TIGR01048">
    <property type="entry name" value="lysA"/>
    <property type="match status" value="1"/>
</dbReference>
<dbReference type="PANTHER" id="PTHR43727">
    <property type="entry name" value="DIAMINOPIMELATE DECARBOXYLASE"/>
    <property type="match status" value="1"/>
</dbReference>
<dbReference type="PANTHER" id="PTHR43727:SF2">
    <property type="entry name" value="GROUP IV DECARBOXYLASE"/>
    <property type="match status" value="1"/>
</dbReference>
<dbReference type="Pfam" id="PF02784">
    <property type="entry name" value="Orn_Arg_deC_N"/>
    <property type="match status" value="1"/>
</dbReference>
<dbReference type="Pfam" id="PF00278">
    <property type="entry name" value="Orn_DAP_Arg_deC"/>
    <property type="match status" value="1"/>
</dbReference>
<dbReference type="PRINTS" id="PR01181">
    <property type="entry name" value="DAPDCRBXLASE"/>
</dbReference>
<dbReference type="PRINTS" id="PR01179">
    <property type="entry name" value="ODADCRBXLASE"/>
</dbReference>
<dbReference type="SUPFAM" id="SSF50621">
    <property type="entry name" value="Alanine racemase C-terminal domain-like"/>
    <property type="match status" value="2"/>
</dbReference>
<dbReference type="SUPFAM" id="SSF51419">
    <property type="entry name" value="PLP-binding barrel"/>
    <property type="match status" value="1"/>
</dbReference>
<dbReference type="PROSITE" id="PS00878">
    <property type="entry name" value="ODR_DC_2_1"/>
    <property type="match status" value="1"/>
</dbReference>
<dbReference type="PROSITE" id="PS00879">
    <property type="entry name" value="ODR_DC_2_2"/>
    <property type="match status" value="1"/>
</dbReference>